<accession>Q48459</accession>
<organism>
    <name type="scientific">Klebsiella pneumoniae</name>
    <dbReference type="NCBI Taxonomy" id="573"/>
    <lineage>
        <taxon>Bacteria</taxon>
        <taxon>Pseudomonadati</taxon>
        <taxon>Pseudomonadota</taxon>
        <taxon>Gammaproteobacteria</taxon>
        <taxon>Enterobacterales</taxon>
        <taxon>Enterobacteriaceae</taxon>
        <taxon>Klebsiella/Raoultella group</taxon>
        <taxon>Klebsiella</taxon>
        <taxon>Klebsiella pneumoniae complex</taxon>
    </lineage>
</organism>
<name>YC13_KLEPN</name>
<sequence>MIFNKVIERISILKNRCRSSECSIIGVLFRMLMFRLVYKKNILTSPKVKIKNIKNIKFNKNSNLIVGLSNVNHVNNNSICYINNRGEMHVSGNVFIAKSVRVDIADSSKIILNDCYIGPETDLISYSGISIGKGSMVSWRVQFLDEDFHLVSYNDKKPKDGKITIGENCLIGNNVAINKGCIIADGCVVASHSVVNGVFLEKNCLIAGVPARVIKRNISWQH</sequence>
<feature type="chain" id="PRO_0000066163" description="Uncharacterized 24.8 kDa protein in cps region">
    <location>
        <begin position="1"/>
        <end position="222"/>
    </location>
</feature>
<proteinExistence type="predicted"/>
<protein>
    <recommendedName>
        <fullName>Uncharacterized 24.8 kDa protein in cps region</fullName>
    </recommendedName>
    <alternativeName>
        <fullName>ORF13</fullName>
    </alternativeName>
</protein>
<reference key="1">
    <citation type="journal article" date="1995" name="J. Bacteriol.">
        <title>Genomic organization of the Klebsiella pneumoniae cps region responsible for serotype K2 capsular polysaccharide synthesis in the virulent strain Chedid.</title>
        <authorList>
            <person name="Arakawa Y."/>
            <person name="Wacharotayankun R."/>
            <person name="Nagatsuka T."/>
            <person name="Ito H."/>
            <person name="Kato N."/>
            <person name="Ohta M."/>
        </authorList>
    </citation>
    <scope>NUCLEOTIDE SEQUENCE [GENOMIC DNA]</scope>
    <source>
        <strain>Chedid</strain>
    </source>
</reference>
<dbReference type="EMBL" id="D21242">
    <property type="protein sequence ID" value="BAA04784.1"/>
    <property type="molecule type" value="Genomic_DNA"/>
</dbReference>
<dbReference type="SMR" id="Q48459"/>
<dbReference type="CDD" id="cd04647">
    <property type="entry name" value="LbH_MAT_like"/>
    <property type="match status" value="1"/>
</dbReference>
<dbReference type="Gene3D" id="2.160.10.10">
    <property type="entry name" value="Hexapeptide repeat proteins"/>
    <property type="match status" value="1"/>
</dbReference>
<dbReference type="InterPro" id="IPR001451">
    <property type="entry name" value="Hexapep"/>
</dbReference>
<dbReference type="InterPro" id="IPR051159">
    <property type="entry name" value="Hexapeptide_acetyltransf"/>
</dbReference>
<dbReference type="InterPro" id="IPR011004">
    <property type="entry name" value="Trimer_LpxA-like_sf"/>
</dbReference>
<dbReference type="PANTHER" id="PTHR23416:SF78">
    <property type="entry name" value="LIPOPOLYSACCHARIDE BIOSYNTHESIS O-ACETYL TRANSFERASE WBBJ-RELATED"/>
    <property type="match status" value="1"/>
</dbReference>
<dbReference type="PANTHER" id="PTHR23416">
    <property type="entry name" value="SIALIC ACID SYNTHASE-RELATED"/>
    <property type="match status" value="1"/>
</dbReference>
<dbReference type="Pfam" id="PF00132">
    <property type="entry name" value="Hexapep"/>
    <property type="match status" value="1"/>
</dbReference>
<dbReference type="SUPFAM" id="SSF51161">
    <property type="entry name" value="Trimeric LpxA-like enzymes"/>
    <property type="match status" value="1"/>
</dbReference>